<keyword id="KW-0067">ATP-binding</keyword>
<keyword id="KW-0324">Glycolysis</keyword>
<keyword id="KW-0418">Kinase</keyword>
<keyword id="KW-0460">Magnesium</keyword>
<keyword id="KW-0479">Metal-binding</keyword>
<keyword id="KW-0547">Nucleotide-binding</keyword>
<keyword id="KW-0808">Transferase</keyword>
<comment type="catalytic activity">
    <reaction evidence="2">
        <text>(2R)-3-phosphoglycerate + ATP = (2R)-3-phospho-glyceroyl phosphate + ADP</text>
        <dbReference type="Rhea" id="RHEA:14801"/>
        <dbReference type="ChEBI" id="CHEBI:30616"/>
        <dbReference type="ChEBI" id="CHEBI:57604"/>
        <dbReference type="ChEBI" id="CHEBI:58272"/>
        <dbReference type="ChEBI" id="CHEBI:456216"/>
        <dbReference type="EC" id="2.7.2.3"/>
    </reaction>
</comment>
<comment type="cofactor">
    <cofactor evidence="2">
        <name>Mg(2+)</name>
        <dbReference type="ChEBI" id="CHEBI:18420"/>
    </cofactor>
</comment>
<comment type="pathway">
    <text>Carbohydrate degradation; glycolysis; pyruvate from D-glyceraldehyde 3-phosphate: step 2/5.</text>
</comment>
<comment type="subunit">
    <text evidence="1">Monomer.</text>
</comment>
<comment type="similarity">
    <text evidence="4">Belongs to the phosphoglycerate kinase family.</text>
</comment>
<organism>
    <name type="scientific">Tetrahymena thermophila</name>
    <dbReference type="NCBI Taxonomy" id="5911"/>
    <lineage>
        <taxon>Eukaryota</taxon>
        <taxon>Sar</taxon>
        <taxon>Alveolata</taxon>
        <taxon>Ciliophora</taxon>
        <taxon>Intramacronucleata</taxon>
        <taxon>Oligohymenophorea</taxon>
        <taxon>Hymenostomatida</taxon>
        <taxon>Tetrahymenina</taxon>
        <taxon>Tetrahymenidae</taxon>
        <taxon>Tetrahymena</taxon>
    </lineage>
</organism>
<evidence type="ECO:0000250" key="1"/>
<evidence type="ECO:0000250" key="2">
    <source>
        <dbReference type="UniProtKB" id="P00558"/>
    </source>
</evidence>
<evidence type="ECO:0000250" key="3">
    <source>
        <dbReference type="UniProtKB" id="Q7SIB7"/>
    </source>
</evidence>
<evidence type="ECO:0000305" key="4"/>
<name>PGK_TETTH</name>
<sequence>MLSRKIGIDHILKHIENKRVLMRVDFNVPLKEGKVKDPTRIQGSVPSIKKILEQNPKGLVLMSHLGRPDGNRVEKHSMKPVVPKLEELLGTKVTFLNDCVGKDVEEAVKSSRNGEIILLENLRFHPEEEGKYIDAAGNKVKADSKAVKEFRKSLTSLGDLFVNDAFGTAHRAHSSMVGVDHKIRAAGYLLKRELDYFSKALESPNRPFLVVLGGAKVKDKIQLIESMLDKVDEMIIGGGMAFTFLKKIHNIEIGNSLFDEEGYKIVDQLLEKAKAKNVKIHLPVDFLCGDSLEANANTRSFDLKSGIPAGWIGLDAGPKTMAENAEAVARANTIVWNGPQGRFEVDKFKVGSSDLLKHVATRTSQGATSIIGGGDTVNLVQQEKATQKVSHVSTGGGASLELLEGKVLPGVAYLTDIDQL</sequence>
<proteinExistence type="evidence at transcript level"/>
<accession>P50313</accession>
<dbReference type="EC" id="2.7.2.3" evidence="2"/>
<dbReference type="EMBL" id="X63529">
    <property type="protein sequence ID" value="CAA45092.1"/>
    <property type="molecule type" value="mRNA"/>
</dbReference>
<dbReference type="EMBL" id="X63528">
    <property type="protein sequence ID" value="CAA45091.1"/>
    <property type="molecule type" value="Genomic_DNA"/>
</dbReference>
<dbReference type="SMR" id="P50313"/>
<dbReference type="OMA" id="DMIFDIG"/>
<dbReference type="UniPathway" id="UPA00109">
    <property type="reaction ID" value="UER00185"/>
</dbReference>
<dbReference type="GO" id="GO:0005829">
    <property type="term" value="C:cytosol"/>
    <property type="evidence" value="ECO:0007669"/>
    <property type="project" value="TreeGrafter"/>
</dbReference>
<dbReference type="GO" id="GO:0043531">
    <property type="term" value="F:ADP binding"/>
    <property type="evidence" value="ECO:0007669"/>
    <property type="project" value="TreeGrafter"/>
</dbReference>
<dbReference type="GO" id="GO:0005524">
    <property type="term" value="F:ATP binding"/>
    <property type="evidence" value="ECO:0007669"/>
    <property type="project" value="UniProtKB-KW"/>
</dbReference>
<dbReference type="GO" id="GO:0046872">
    <property type="term" value="F:metal ion binding"/>
    <property type="evidence" value="ECO:0007669"/>
    <property type="project" value="UniProtKB-KW"/>
</dbReference>
<dbReference type="GO" id="GO:0004618">
    <property type="term" value="F:phosphoglycerate kinase activity"/>
    <property type="evidence" value="ECO:0007669"/>
    <property type="project" value="UniProtKB-EC"/>
</dbReference>
<dbReference type="GO" id="GO:0006094">
    <property type="term" value="P:gluconeogenesis"/>
    <property type="evidence" value="ECO:0007669"/>
    <property type="project" value="TreeGrafter"/>
</dbReference>
<dbReference type="GO" id="GO:0006096">
    <property type="term" value="P:glycolytic process"/>
    <property type="evidence" value="ECO:0007669"/>
    <property type="project" value="UniProtKB-UniPathway"/>
</dbReference>
<dbReference type="CDD" id="cd00318">
    <property type="entry name" value="Phosphoglycerate_kinase"/>
    <property type="match status" value="1"/>
</dbReference>
<dbReference type="FunFam" id="3.40.50.1260:FF:000003">
    <property type="entry name" value="Phosphoglycerate kinase"/>
    <property type="match status" value="1"/>
</dbReference>
<dbReference type="FunFam" id="3.40.50.1260:FF:000019">
    <property type="entry name" value="Phosphoglycerate kinase 1"/>
    <property type="match status" value="1"/>
</dbReference>
<dbReference type="Gene3D" id="3.40.50.1260">
    <property type="entry name" value="Phosphoglycerate kinase, N-terminal domain"/>
    <property type="match status" value="3"/>
</dbReference>
<dbReference type="HAMAP" id="MF_00145">
    <property type="entry name" value="Phosphoglyc_kinase"/>
    <property type="match status" value="1"/>
</dbReference>
<dbReference type="InterPro" id="IPR001576">
    <property type="entry name" value="Phosphoglycerate_kinase"/>
</dbReference>
<dbReference type="InterPro" id="IPR015911">
    <property type="entry name" value="Phosphoglycerate_kinase_CS"/>
</dbReference>
<dbReference type="InterPro" id="IPR015824">
    <property type="entry name" value="Phosphoglycerate_kinase_N"/>
</dbReference>
<dbReference type="InterPro" id="IPR036043">
    <property type="entry name" value="Phosphoglycerate_kinase_sf"/>
</dbReference>
<dbReference type="PANTHER" id="PTHR11406">
    <property type="entry name" value="PHOSPHOGLYCERATE KINASE"/>
    <property type="match status" value="1"/>
</dbReference>
<dbReference type="PANTHER" id="PTHR11406:SF0">
    <property type="entry name" value="PHOSPHOGLYCERATE KINASE"/>
    <property type="match status" value="1"/>
</dbReference>
<dbReference type="Pfam" id="PF00162">
    <property type="entry name" value="PGK"/>
    <property type="match status" value="1"/>
</dbReference>
<dbReference type="PIRSF" id="PIRSF000724">
    <property type="entry name" value="Pgk"/>
    <property type="match status" value="1"/>
</dbReference>
<dbReference type="PRINTS" id="PR00477">
    <property type="entry name" value="PHGLYCKINASE"/>
</dbReference>
<dbReference type="SUPFAM" id="SSF53748">
    <property type="entry name" value="Phosphoglycerate kinase"/>
    <property type="match status" value="1"/>
</dbReference>
<dbReference type="PROSITE" id="PS00111">
    <property type="entry name" value="PGLYCERATE_KINASE"/>
    <property type="match status" value="1"/>
</dbReference>
<reference key="1">
    <citation type="journal article" date="1992" name="J. Mol. Evol.">
        <title>A phylogenetic analysis based on the gene encoding phosphoglycerate kinase.</title>
        <authorList>
            <person name="Vohra G.B."/>
            <person name="Golding G.B."/>
            <person name="Tsao N."/>
            <person name="Pearlman R.E."/>
        </authorList>
    </citation>
    <scope>NUCLEOTIDE SEQUENCE [GENOMIC DNA / MRNA]</scope>
    <source>
        <strain>CU329</strain>
    </source>
</reference>
<reference key="2">
    <citation type="journal article" date="1992" name="J. Mol. Evol.">
        <authorList>
            <person name="Vohra G.B."/>
            <person name="Golding G.B."/>
            <person name="Tsao N."/>
            <person name="Pearlman R.E."/>
        </authorList>
    </citation>
    <scope>ERRATUM OF PUBMED:1602492</scope>
</reference>
<protein>
    <recommendedName>
        <fullName>Phosphoglycerate kinase</fullName>
        <ecNumber evidence="2">2.7.2.3</ecNumber>
    </recommendedName>
</protein>
<gene>
    <name type="primary">PGK</name>
</gene>
<feature type="chain" id="PRO_0000145861" description="Phosphoglycerate kinase">
    <location>
        <begin position="1"/>
        <end position="420"/>
    </location>
</feature>
<feature type="binding site" evidence="2">
    <location>
        <position position="24"/>
    </location>
    <ligand>
        <name>(2R)-3-phosphoglycerate</name>
        <dbReference type="ChEBI" id="CHEBI:58272"/>
    </ligand>
</feature>
<feature type="binding site" evidence="3">
    <location>
        <position position="25"/>
    </location>
    <ligand>
        <name>(2R)-3-phosphoglycerate</name>
        <dbReference type="ChEBI" id="CHEBI:58272"/>
    </ligand>
</feature>
<feature type="binding site" evidence="2">
    <location>
        <position position="26"/>
    </location>
    <ligand>
        <name>(2R)-3-phosphoglycerate</name>
        <dbReference type="ChEBI" id="CHEBI:58272"/>
    </ligand>
</feature>
<feature type="binding site" evidence="3">
    <location>
        <position position="27"/>
    </location>
    <ligand>
        <name>(2R)-3-phosphoglycerate</name>
        <dbReference type="ChEBI" id="CHEBI:58272"/>
    </ligand>
</feature>
<feature type="binding site" evidence="3">
    <location>
        <position position="40"/>
    </location>
    <ligand>
        <name>(2R)-3-phosphoglycerate</name>
        <dbReference type="ChEBI" id="CHEBI:58272"/>
    </ligand>
</feature>
<feature type="binding site" evidence="2">
    <location>
        <position position="63"/>
    </location>
    <ligand>
        <name>(2R)-3-phosphoglycerate</name>
        <dbReference type="ChEBI" id="CHEBI:58272"/>
    </ligand>
</feature>
<feature type="binding site" evidence="3">
    <location>
        <position position="64"/>
    </location>
    <ligand>
        <name>(2R)-3-phosphoglycerate</name>
        <dbReference type="ChEBI" id="CHEBI:58272"/>
    </ligand>
</feature>
<feature type="binding site" evidence="2">
    <location>
        <position position="66"/>
    </location>
    <ligand>
        <name>(2R)-3-phosphoglycerate</name>
        <dbReference type="ChEBI" id="CHEBI:58272"/>
    </ligand>
</feature>
<feature type="binding site" evidence="3">
    <location>
        <position position="67"/>
    </location>
    <ligand>
        <name>(2R)-3-phosphoglycerate</name>
        <dbReference type="ChEBI" id="CHEBI:58272"/>
    </ligand>
</feature>
<feature type="binding site" evidence="2">
    <location>
        <position position="122"/>
    </location>
    <ligand>
        <name>(2R)-3-phosphoglycerate</name>
        <dbReference type="ChEBI" id="CHEBI:58272"/>
    </ligand>
</feature>
<feature type="binding site" evidence="3">
    <location>
        <position position="123"/>
    </location>
    <ligand>
        <name>(2R)-3-phosphoglycerate</name>
        <dbReference type="ChEBI" id="CHEBI:58272"/>
    </ligand>
</feature>
<feature type="binding site" evidence="2">
    <location>
        <position position="170"/>
    </location>
    <ligand>
        <name>(2R)-3-phosphoglycerate</name>
        <dbReference type="ChEBI" id="CHEBI:58272"/>
    </ligand>
</feature>
<feature type="binding site" evidence="3">
    <location>
        <position position="171"/>
    </location>
    <ligand>
        <name>(2R)-3-phosphoglycerate</name>
        <dbReference type="ChEBI" id="CHEBI:58272"/>
    </ligand>
</feature>
<feature type="binding site" evidence="2">
    <location>
        <position position="214"/>
    </location>
    <ligand>
        <name>ADP</name>
        <dbReference type="ChEBI" id="CHEBI:456216"/>
    </ligand>
</feature>
<feature type="binding site" evidence="2">
    <location>
        <position position="214"/>
    </location>
    <ligand>
        <name>CDP</name>
        <dbReference type="ChEBI" id="CHEBI:58069"/>
    </ligand>
</feature>
<feature type="binding site" evidence="3">
    <location>
        <position position="215"/>
    </location>
    <ligand>
        <name>AMP</name>
        <dbReference type="ChEBI" id="CHEBI:456215"/>
    </ligand>
</feature>
<feature type="binding site" evidence="3">
    <location>
        <position position="215"/>
    </location>
    <ligand>
        <name>ATP</name>
        <dbReference type="ChEBI" id="CHEBI:30616"/>
    </ligand>
</feature>
<feature type="binding site" evidence="2">
    <location>
        <position position="215"/>
    </location>
    <ligand>
        <name>Mg(2+)</name>
        <dbReference type="ChEBI" id="CHEBI:18420"/>
    </ligand>
</feature>
<feature type="binding site" evidence="3">
    <location>
        <position position="216"/>
    </location>
    <ligand>
        <name>AMP</name>
        <dbReference type="ChEBI" id="CHEBI:456215"/>
    </ligand>
</feature>
<feature type="binding site" evidence="2">
    <location>
        <position position="219"/>
    </location>
    <ligand>
        <name>CDP</name>
        <dbReference type="ChEBI" id="CHEBI:58069"/>
    </ligand>
</feature>
<feature type="binding site" evidence="2">
    <location>
        <position position="219"/>
    </location>
    <ligand>
        <name>Mg(2+)</name>
        <dbReference type="ChEBI" id="CHEBI:18420"/>
    </ligand>
</feature>
<feature type="binding site" evidence="3">
    <location>
        <position position="220"/>
    </location>
    <ligand>
        <name>AMP</name>
        <dbReference type="ChEBI" id="CHEBI:456215"/>
    </ligand>
</feature>
<feature type="binding site" evidence="3">
    <location>
        <position position="220"/>
    </location>
    <ligand>
        <name>ATP</name>
        <dbReference type="ChEBI" id="CHEBI:30616"/>
    </ligand>
</feature>
<feature type="binding site" evidence="2">
    <location>
        <position position="238"/>
    </location>
    <ligand>
        <name>ADP</name>
        <dbReference type="ChEBI" id="CHEBI:456216"/>
    </ligand>
</feature>
<feature type="binding site" evidence="2">
    <location>
        <position position="238"/>
    </location>
    <ligand>
        <name>CDP</name>
        <dbReference type="ChEBI" id="CHEBI:58069"/>
    </ligand>
</feature>
<feature type="binding site" evidence="3">
    <location>
        <position position="239"/>
    </location>
    <ligand>
        <name>AMP</name>
        <dbReference type="ChEBI" id="CHEBI:456215"/>
    </ligand>
</feature>
<feature type="binding site" evidence="3">
    <location>
        <position position="239"/>
    </location>
    <ligand>
        <name>ATP</name>
        <dbReference type="ChEBI" id="CHEBI:30616"/>
    </ligand>
</feature>
<feature type="binding site" evidence="3">
    <location>
        <position position="313"/>
    </location>
    <ligand>
        <name>AMP</name>
        <dbReference type="ChEBI" id="CHEBI:456215"/>
    </ligand>
</feature>
<feature type="binding site" evidence="3">
    <location>
        <position position="313"/>
    </location>
    <ligand>
        <name>ATP</name>
        <dbReference type="ChEBI" id="CHEBI:30616"/>
    </ligand>
</feature>
<feature type="binding site" evidence="2">
    <location>
        <position position="338"/>
    </location>
    <ligand>
        <name>CDP</name>
        <dbReference type="ChEBI" id="CHEBI:58069"/>
    </ligand>
</feature>
<feature type="binding site" evidence="2">
    <location>
        <position position="343"/>
    </location>
    <ligand>
        <name>ADP</name>
        <dbReference type="ChEBI" id="CHEBI:456216"/>
    </ligand>
</feature>
<feature type="binding site" evidence="2">
    <location>
        <position position="343"/>
    </location>
    <ligand>
        <name>CDP</name>
        <dbReference type="ChEBI" id="CHEBI:58069"/>
    </ligand>
</feature>
<feature type="binding site" evidence="3">
    <location>
        <position position="344"/>
    </location>
    <ligand>
        <name>AMP</name>
        <dbReference type="ChEBI" id="CHEBI:456215"/>
    </ligand>
</feature>
<feature type="binding site" evidence="3">
    <location>
        <position position="344"/>
    </location>
    <ligand>
        <name>ATP</name>
        <dbReference type="ChEBI" id="CHEBI:30616"/>
    </ligand>
</feature>
<feature type="binding site" evidence="3">
    <location>
        <position position="375"/>
    </location>
    <ligand>
        <name>ATP</name>
        <dbReference type="ChEBI" id="CHEBI:30616"/>
    </ligand>
</feature>
<feature type="binding site" evidence="3">
    <location>
        <position position="375"/>
    </location>
    <ligand>
        <name>Mg(2+)</name>
        <dbReference type="ChEBI" id="CHEBI:18420"/>
    </ligand>
</feature>
<feature type="binding site" evidence="3">
    <location>
        <position position="376"/>
    </location>
    <ligand>
        <name>ATP</name>
        <dbReference type="ChEBI" id="CHEBI:30616"/>
    </ligand>
</feature>